<keyword id="KW-1185">Reference proteome</keyword>
<accession>Q0BWN3</accession>
<gene>
    <name type="ordered locus">HNE_3437</name>
</gene>
<name>Y3437_HYPNA</name>
<reference key="1">
    <citation type="journal article" date="2006" name="J. Bacteriol.">
        <title>Comparative genomic evidence for a close relationship between the dimorphic prosthecate bacteria Hyphomonas neptunium and Caulobacter crescentus.</title>
        <authorList>
            <person name="Badger J.H."/>
            <person name="Hoover T.R."/>
            <person name="Brun Y.V."/>
            <person name="Weiner R.M."/>
            <person name="Laub M.T."/>
            <person name="Alexandre G."/>
            <person name="Mrazek J."/>
            <person name="Ren Q."/>
            <person name="Paulsen I.T."/>
            <person name="Nelson K.E."/>
            <person name="Khouri H.M."/>
            <person name="Radune D."/>
            <person name="Sosa J."/>
            <person name="Dodson R.J."/>
            <person name="Sullivan S.A."/>
            <person name="Rosovitz M.J."/>
            <person name="Madupu R."/>
            <person name="Brinkac L.M."/>
            <person name="Durkin A.S."/>
            <person name="Daugherty S.C."/>
            <person name="Kothari S.P."/>
            <person name="Giglio M.G."/>
            <person name="Zhou L."/>
            <person name="Haft D.H."/>
            <person name="Selengut J.D."/>
            <person name="Davidsen T.M."/>
            <person name="Yang Q."/>
            <person name="Zafar N."/>
            <person name="Ward N.L."/>
        </authorList>
    </citation>
    <scope>NUCLEOTIDE SEQUENCE [LARGE SCALE GENOMIC DNA]</scope>
    <source>
        <strain>ATCC 15444</strain>
    </source>
</reference>
<dbReference type="EMBL" id="CP000158">
    <property type="protein sequence ID" value="ABI76993.1"/>
    <property type="molecule type" value="Genomic_DNA"/>
</dbReference>
<dbReference type="RefSeq" id="WP_011648405.1">
    <property type="nucleotide sequence ID" value="NC_008358.1"/>
</dbReference>
<dbReference type="STRING" id="228405.HNE_3437"/>
<dbReference type="KEGG" id="hne:HNE_3437"/>
<dbReference type="eggNOG" id="COG3811">
    <property type="taxonomic scope" value="Bacteria"/>
</dbReference>
<dbReference type="HOGENOM" id="CLU_164736_0_0_5"/>
<dbReference type="Proteomes" id="UP000001959">
    <property type="component" value="Chromosome"/>
</dbReference>
<dbReference type="HAMAP" id="MF_00827">
    <property type="entry name" value="UPF0386"/>
    <property type="match status" value="1"/>
</dbReference>
<dbReference type="InterPro" id="IPR018654">
    <property type="entry name" value="YjhX_toxin"/>
</dbReference>
<dbReference type="NCBIfam" id="NF010240">
    <property type="entry name" value="PRK13687.1"/>
    <property type="match status" value="1"/>
</dbReference>
<dbReference type="Pfam" id="PF09857">
    <property type="entry name" value="YjhX_toxin"/>
    <property type="match status" value="1"/>
</dbReference>
<protein>
    <recommendedName>
        <fullName evidence="1">UPF0386 protein HNE_3437</fullName>
    </recommendedName>
</protein>
<comment type="similarity">
    <text evidence="1">Belongs to the UPF0386 family.</text>
</comment>
<organism>
    <name type="scientific">Hyphomonas neptunium (strain ATCC 15444)</name>
    <dbReference type="NCBI Taxonomy" id="228405"/>
    <lineage>
        <taxon>Bacteria</taxon>
        <taxon>Pseudomonadati</taxon>
        <taxon>Pseudomonadota</taxon>
        <taxon>Alphaproteobacteria</taxon>
        <taxon>Hyphomonadales</taxon>
        <taxon>Hyphomonadaceae</taxon>
        <taxon>Hyphomonas</taxon>
    </lineage>
</organism>
<sequence length="85" mass="9927">MDISRAEQRILHLLAQGGRIDLVRDEAGKLTDAHCYSRDGWRYTGLDMALFRKLKRRRTIASERGQPYRITRRGLQLVRSQPDNC</sequence>
<evidence type="ECO:0000255" key="1">
    <source>
        <dbReference type="HAMAP-Rule" id="MF_00827"/>
    </source>
</evidence>
<proteinExistence type="inferred from homology"/>
<feature type="chain" id="PRO_1000062707" description="UPF0386 protein HNE_3437">
    <location>
        <begin position="1"/>
        <end position="85"/>
    </location>
</feature>